<keyword id="KW-0966">Cell projection</keyword>
<keyword id="KW-0968">Cytoplasmic vesicle</keyword>
<keyword id="KW-0325">Glycoprotein</keyword>
<keyword id="KW-0472">Membrane</keyword>
<keyword id="KW-0532">Neurotransmitter transport</keyword>
<keyword id="KW-0597">Phosphoprotein</keyword>
<keyword id="KW-0675">Receptor</keyword>
<keyword id="KW-1185">Reference proteome</keyword>
<keyword id="KW-0770">Synapse</keyword>
<keyword id="KW-0812">Transmembrane</keyword>
<keyword id="KW-1133">Transmembrane helix</keyword>
<keyword id="KW-0813">Transport</keyword>
<evidence type="ECO:0000250" key="1"/>
<evidence type="ECO:0000250" key="2">
    <source>
        <dbReference type="UniProtKB" id="Q02563"/>
    </source>
</evidence>
<evidence type="ECO:0000255" key="3"/>
<evidence type="ECO:0000256" key="4">
    <source>
        <dbReference type="SAM" id="MobiDB-lite"/>
    </source>
</evidence>
<evidence type="ECO:0000269" key="5">
    <source>
    </source>
</evidence>
<evidence type="ECO:0000269" key="6">
    <source>
    </source>
</evidence>
<evidence type="ECO:0000269" key="7">
    <source>
    </source>
</evidence>
<evidence type="ECO:0000269" key="8">
    <source>
    </source>
</evidence>
<evidence type="ECO:0000269" key="9">
    <source>
    </source>
</evidence>
<evidence type="ECO:0000269" key="10">
    <source>
    </source>
</evidence>
<evidence type="ECO:0000269" key="11">
    <source>
    </source>
</evidence>
<evidence type="ECO:0000269" key="12">
    <source>
    </source>
</evidence>
<evidence type="ECO:0000305" key="13"/>
<evidence type="ECO:0000305" key="14">
    <source>
    </source>
</evidence>
<evidence type="ECO:0000305" key="15">
    <source>
    </source>
</evidence>
<evidence type="ECO:0007744" key="16">
    <source>
    </source>
</evidence>
<evidence type="ECO:0007744" key="17">
    <source>
    </source>
</evidence>
<dbReference type="EMBL" id="AF196781">
    <property type="protein sequence ID" value="AAF87321.1"/>
    <property type="molecule type" value="Genomic_DNA"/>
</dbReference>
<dbReference type="EMBL" id="AF196780">
    <property type="protein sequence ID" value="AAF87321.1"/>
    <property type="status" value="JOINED"/>
    <property type="molecule type" value="Genomic_DNA"/>
</dbReference>
<dbReference type="EMBL" id="AK122360">
    <property type="protein sequence ID" value="BAC65642.3"/>
    <property type="status" value="ALT_SEQ"/>
    <property type="molecule type" value="Transcribed_RNA"/>
</dbReference>
<dbReference type="EMBL" id="AK028318">
    <property type="protein sequence ID" value="BAC25876.1"/>
    <property type="molecule type" value="mRNA"/>
</dbReference>
<dbReference type="EMBL" id="BC026494">
    <property type="protein sequence ID" value="AAH26494.1"/>
    <property type="molecule type" value="mRNA"/>
</dbReference>
<dbReference type="EMBL" id="BC046587">
    <property type="protein sequence ID" value="AAH46587.1"/>
    <property type="molecule type" value="mRNA"/>
</dbReference>
<dbReference type="CCDS" id="CCDS17631.1"/>
<dbReference type="RefSeq" id="NP_071313.1">
    <property type="nucleotide sequence ID" value="NM_022030.3"/>
</dbReference>
<dbReference type="SMR" id="Q9JIS5"/>
<dbReference type="BioGRID" id="211019">
    <property type="interactions" value="9"/>
</dbReference>
<dbReference type="FunCoup" id="Q9JIS5">
    <property type="interactions" value="848"/>
</dbReference>
<dbReference type="IntAct" id="Q9JIS5">
    <property type="interactions" value="6"/>
</dbReference>
<dbReference type="MINT" id="Q9JIS5"/>
<dbReference type="STRING" id="10090.ENSMUSP00000037576"/>
<dbReference type="BindingDB" id="Q9JIS5"/>
<dbReference type="ChEMBL" id="CHEMBL5169198"/>
<dbReference type="GlyConnect" id="2746">
    <property type="glycosylation" value="8 N-Linked glycans (2 sites)"/>
</dbReference>
<dbReference type="GlyCosmos" id="Q9JIS5">
    <property type="glycosylation" value="3 sites, 8 glycans"/>
</dbReference>
<dbReference type="GlyGen" id="Q9JIS5">
    <property type="glycosylation" value="4 sites, 11 N-linked glycans (3 sites), 1 O-linked glycan (1 site)"/>
</dbReference>
<dbReference type="iPTMnet" id="Q9JIS5"/>
<dbReference type="PhosphoSitePlus" id="Q9JIS5"/>
<dbReference type="SwissPalm" id="Q9JIS5"/>
<dbReference type="PaxDb" id="10090-ENSMUSP00000037576"/>
<dbReference type="PeptideAtlas" id="Q9JIS5"/>
<dbReference type="ProteomicsDB" id="258675"/>
<dbReference type="Antibodypedia" id="2184">
    <property type="antibodies" value="178 antibodies from 34 providers"/>
</dbReference>
<dbReference type="DNASU" id="64051"/>
<dbReference type="Ensembl" id="ENSMUST00000035371.9">
    <property type="protein sequence ID" value="ENSMUSP00000037576.9"/>
    <property type="gene ID" value="ENSMUSG00000038486.10"/>
</dbReference>
<dbReference type="GeneID" id="64051"/>
<dbReference type="KEGG" id="mmu:64051"/>
<dbReference type="UCSC" id="uc008qmf.1">
    <property type="organism name" value="mouse"/>
</dbReference>
<dbReference type="AGR" id="MGI:1927139"/>
<dbReference type="CTD" id="9900"/>
<dbReference type="MGI" id="MGI:1927139">
    <property type="gene designation" value="Sv2a"/>
</dbReference>
<dbReference type="VEuPathDB" id="HostDB:ENSMUSG00000038486"/>
<dbReference type="eggNOG" id="KOG0255">
    <property type="taxonomic scope" value="Eukaryota"/>
</dbReference>
<dbReference type="GeneTree" id="ENSGT00950000182940"/>
<dbReference type="HOGENOM" id="CLU_001265_46_15_1"/>
<dbReference type="InParanoid" id="Q9JIS5"/>
<dbReference type="OMA" id="NDKSMVF"/>
<dbReference type="OrthoDB" id="433512at2759"/>
<dbReference type="PhylomeDB" id="Q9JIS5"/>
<dbReference type="TreeFam" id="TF324824"/>
<dbReference type="BioGRID-ORCS" id="64051">
    <property type="hits" value="6 hits in 77 CRISPR screens"/>
</dbReference>
<dbReference type="CD-CODE" id="CE726F99">
    <property type="entry name" value="Postsynaptic density"/>
</dbReference>
<dbReference type="ChiTaRS" id="Sv2a">
    <property type="organism name" value="mouse"/>
</dbReference>
<dbReference type="PRO" id="PR:Q9JIS5"/>
<dbReference type="Proteomes" id="UP000000589">
    <property type="component" value="Chromosome 3"/>
</dbReference>
<dbReference type="RNAct" id="Q9JIS5">
    <property type="molecule type" value="protein"/>
</dbReference>
<dbReference type="Bgee" id="ENSMUSG00000038486">
    <property type="expression patterns" value="Expressed in lateral geniculate body and 177 other cell types or tissues"/>
</dbReference>
<dbReference type="GO" id="GO:0005911">
    <property type="term" value="C:cell-cell junction"/>
    <property type="evidence" value="ECO:0000314"/>
    <property type="project" value="MGI"/>
</dbReference>
<dbReference type="GO" id="GO:0005783">
    <property type="term" value="C:endoplasmic reticulum"/>
    <property type="evidence" value="ECO:0007669"/>
    <property type="project" value="Ensembl"/>
</dbReference>
<dbReference type="GO" id="GO:0098982">
    <property type="term" value="C:GABA-ergic synapse"/>
    <property type="evidence" value="ECO:0000314"/>
    <property type="project" value="SynGO"/>
</dbReference>
<dbReference type="GO" id="GO:0098978">
    <property type="term" value="C:glutamatergic synapse"/>
    <property type="evidence" value="ECO:0000314"/>
    <property type="project" value="SynGO"/>
</dbReference>
<dbReference type="GO" id="GO:0031594">
    <property type="term" value="C:neuromuscular junction"/>
    <property type="evidence" value="ECO:0000314"/>
    <property type="project" value="MGI"/>
</dbReference>
<dbReference type="GO" id="GO:0043005">
    <property type="term" value="C:neuron projection"/>
    <property type="evidence" value="ECO:0000314"/>
    <property type="project" value="BHF-UCL"/>
</dbReference>
<dbReference type="GO" id="GO:0048786">
    <property type="term" value="C:presynaptic active zone"/>
    <property type="evidence" value="ECO:0000314"/>
    <property type="project" value="BHF-UCL"/>
</dbReference>
<dbReference type="GO" id="GO:0045202">
    <property type="term" value="C:synapse"/>
    <property type="evidence" value="ECO:0000266"/>
    <property type="project" value="MGI"/>
</dbReference>
<dbReference type="GO" id="GO:0008021">
    <property type="term" value="C:synaptic vesicle"/>
    <property type="evidence" value="ECO:0000314"/>
    <property type="project" value="MGI"/>
</dbReference>
<dbReference type="GO" id="GO:0030672">
    <property type="term" value="C:synaptic vesicle membrane"/>
    <property type="evidence" value="ECO:0007669"/>
    <property type="project" value="UniProtKB-SubCell"/>
</dbReference>
<dbReference type="GO" id="GO:0019901">
    <property type="term" value="F:protein kinase binding"/>
    <property type="evidence" value="ECO:0000353"/>
    <property type="project" value="ParkinsonsUK-UCL"/>
</dbReference>
<dbReference type="GO" id="GO:0022857">
    <property type="term" value="F:transmembrane transporter activity"/>
    <property type="evidence" value="ECO:0007669"/>
    <property type="project" value="InterPro"/>
</dbReference>
<dbReference type="GO" id="GO:0007268">
    <property type="term" value="P:chemical synaptic transmission"/>
    <property type="evidence" value="ECO:0000304"/>
    <property type="project" value="MGI"/>
</dbReference>
<dbReference type="GO" id="GO:0006874">
    <property type="term" value="P:intracellular calcium ion homeostasis"/>
    <property type="evidence" value="ECO:0000314"/>
    <property type="project" value="MGI"/>
</dbReference>
<dbReference type="GO" id="GO:0016082">
    <property type="term" value="P:synaptic vesicle priming"/>
    <property type="evidence" value="ECO:0000314"/>
    <property type="project" value="SynGO"/>
</dbReference>
<dbReference type="CDD" id="cd17439">
    <property type="entry name" value="MFS_SV2A"/>
    <property type="match status" value="1"/>
</dbReference>
<dbReference type="FunFam" id="1.20.1250.20:FF:000009">
    <property type="entry name" value="Synaptic vesicle glycoprotein 2A"/>
    <property type="match status" value="1"/>
</dbReference>
<dbReference type="FunFam" id="2.160.20.80:FF:000001">
    <property type="entry name" value="Synaptic vesicle glycoprotein 2A"/>
    <property type="match status" value="1"/>
</dbReference>
<dbReference type="FunFam" id="1.20.1250.20:FF:000014">
    <property type="entry name" value="synaptic vesicle glycoprotein 2A"/>
    <property type="match status" value="1"/>
</dbReference>
<dbReference type="Gene3D" id="2.160.20.80">
    <property type="entry name" value="E3 ubiquitin-protein ligase SopA"/>
    <property type="match status" value="1"/>
</dbReference>
<dbReference type="Gene3D" id="1.20.1250.20">
    <property type="entry name" value="MFS general substrate transporter like domains"/>
    <property type="match status" value="2"/>
</dbReference>
<dbReference type="InterPro" id="IPR055415">
    <property type="entry name" value="LD_SV2"/>
</dbReference>
<dbReference type="InterPro" id="IPR011701">
    <property type="entry name" value="MFS"/>
</dbReference>
<dbReference type="InterPro" id="IPR020846">
    <property type="entry name" value="MFS_dom"/>
</dbReference>
<dbReference type="InterPro" id="IPR005828">
    <property type="entry name" value="MFS_sugar_transport-like"/>
</dbReference>
<dbReference type="InterPro" id="IPR036259">
    <property type="entry name" value="MFS_trans_sf"/>
</dbReference>
<dbReference type="InterPro" id="IPR005829">
    <property type="entry name" value="Sugar_transporter_CS"/>
</dbReference>
<dbReference type="InterPro" id="IPR022308">
    <property type="entry name" value="SV2"/>
</dbReference>
<dbReference type="NCBIfam" id="TIGR01299">
    <property type="entry name" value="synapt_SV2"/>
    <property type="match status" value="1"/>
</dbReference>
<dbReference type="PANTHER" id="PTHR23511">
    <property type="entry name" value="SYNAPTIC VESICLE GLYCOPROTEIN 2"/>
    <property type="match status" value="1"/>
</dbReference>
<dbReference type="PANTHER" id="PTHR23511:SF11">
    <property type="entry name" value="SYNAPTIC VESICLE GLYCOPROTEIN 2A"/>
    <property type="match status" value="1"/>
</dbReference>
<dbReference type="Pfam" id="PF23894">
    <property type="entry name" value="LD_SV2"/>
    <property type="match status" value="1"/>
</dbReference>
<dbReference type="Pfam" id="PF07690">
    <property type="entry name" value="MFS_1"/>
    <property type="match status" value="1"/>
</dbReference>
<dbReference type="Pfam" id="PF00083">
    <property type="entry name" value="Sugar_tr"/>
    <property type="match status" value="1"/>
</dbReference>
<dbReference type="SUPFAM" id="SSF103473">
    <property type="entry name" value="MFS general substrate transporter"/>
    <property type="match status" value="2"/>
</dbReference>
<dbReference type="SUPFAM" id="SSF141571">
    <property type="entry name" value="Pentapeptide repeat-like"/>
    <property type="match status" value="1"/>
</dbReference>
<dbReference type="PROSITE" id="PS50850">
    <property type="entry name" value="MFS"/>
    <property type="match status" value="1"/>
</dbReference>
<reference key="1">
    <citation type="journal article" date="1999" name="Neuron">
        <title>SV2A and SV2B function as redundant Ca2+ regulators in neurotransmitter release.</title>
        <authorList>
            <person name="Janz R."/>
            <person name="Goda Y."/>
            <person name="Geppert M."/>
            <person name="Missler M."/>
            <person name="Suedhof T.C."/>
        </authorList>
    </citation>
    <scope>NUCLEOTIDE SEQUENCE [GENOMIC DNA]</scope>
    <scope>FUNCTION</scope>
    <source>
        <strain>129/Sv</strain>
    </source>
</reference>
<reference key="2">
    <citation type="journal article" date="2003" name="DNA Res.">
        <title>Prediction of the coding sequences of mouse homologues of KIAA gene: II. The complete nucleotide sequences of 400 mouse KIAA-homologous cDNAs identified by screening of terminal sequences of cDNA clones randomly sampled from size-fractionated libraries.</title>
        <authorList>
            <person name="Okazaki N."/>
            <person name="Kikuno R."/>
            <person name="Ohara R."/>
            <person name="Inamoto S."/>
            <person name="Aizawa H."/>
            <person name="Yuasa S."/>
            <person name="Nakajima D."/>
            <person name="Nagase T."/>
            <person name="Ohara O."/>
            <person name="Koga H."/>
        </authorList>
    </citation>
    <scope>NUCLEOTIDE SEQUENCE [LARGE SCALE MRNA]</scope>
</reference>
<reference key="3">
    <citation type="submission" date="2003-08" db="EMBL/GenBank/DDBJ databases">
        <authorList>
            <person name="Okazaki N."/>
            <person name="Kikuno R."/>
            <person name="Nagase T."/>
            <person name="Ohara O."/>
            <person name="Koga H."/>
        </authorList>
    </citation>
    <scope>SEQUENCE REVISION</scope>
</reference>
<reference key="4">
    <citation type="journal article" date="2005" name="Science">
        <title>The transcriptional landscape of the mammalian genome.</title>
        <authorList>
            <person name="Carninci P."/>
            <person name="Kasukawa T."/>
            <person name="Katayama S."/>
            <person name="Gough J."/>
            <person name="Frith M.C."/>
            <person name="Maeda N."/>
            <person name="Oyama R."/>
            <person name="Ravasi T."/>
            <person name="Lenhard B."/>
            <person name="Wells C."/>
            <person name="Kodzius R."/>
            <person name="Shimokawa K."/>
            <person name="Bajic V.B."/>
            <person name="Brenner S.E."/>
            <person name="Batalov S."/>
            <person name="Forrest A.R."/>
            <person name="Zavolan M."/>
            <person name="Davis M.J."/>
            <person name="Wilming L.G."/>
            <person name="Aidinis V."/>
            <person name="Allen J.E."/>
            <person name="Ambesi-Impiombato A."/>
            <person name="Apweiler R."/>
            <person name="Aturaliya R.N."/>
            <person name="Bailey T.L."/>
            <person name="Bansal M."/>
            <person name="Baxter L."/>
            <person name="Beisel K.W."/>
            <person name="Bersano T."/>
            <person name="Bono H."/>
            <person name="Chalk A.M."/>
            <person name="Chiu K.P."/>
            <person name="Choudhary V."/>
            <person name="Christoffels A."/>
            <person name="Clutterbuck D.R."/>
            <person name="Crowe M.L."/>
            <person name="Dalla E."/>
            <person name="Dalrymple B.P."/>
            <person name="de Bono B."/>
            <person name="Della Gatta G."/>
            <person name="di Bernardo D."/>
            <person name="Down T."/>
            <person name="Engstrom P."/>
            <person name="Fagiolini M."/>
            <person name="Faulkner G."/>
            <person name="Fletcher C.F."/>
            <person name="Fukushima T."/>
            <person name="Furuno M."/>
            <person name="Futaki S."/>
            <person name="Gariboldi M."/>
            <person name="Georgii-Hemming P."/>
            <person name="Gingeras T.R."/>
            <person name="Gojobori T."/>
            <person name="Green R.E."/>
            <person name="Gustincich S."/>
            <person name="Harbers M."/>
            <person name="Hayashi Y."/>
            <person name="Hensch T.K."/>
            <person name="Hirokawa N."/>
            <person name="Hill D."/>
            <person name="Huminiecki L."/>
            <person name="Iacono M."/>
            <person name="Ikeo K."/>
            <person name="Iwama A."/>
            <person name="Ishikawa T."/>
            <person name="Jakt M."/>
            <person name="Kanapin A."/>
            <person name="Katoh M."/>
            <person name="Kawasawa Y."/>
            <person name="Kelso J."/>
            <person name="Kitamura H."/>
            <person name="Kitano H."/>
            <person name="Kollias G."/>
            <person name="Krishnan S.P."/>
            <person name="Kruger A."/>
            <person name="Kummerfeld S.K."/>
            <person name="Kurochkin I.V."/>
            <person name="Lareau L.F."/>
            <person name="Lazarevic D."/>
            <person name="Lipovich L."/>
            <person name="Liu J."/>
            <person name="Liuni S."/>
            <person name="McWilliam S."/>
            <person name="Madan Babu M."/>
            <person name="Madera M."/>
            <person name="Marchionni L."/>
            <person name="Matsuda H."/>
            <person name="Matsuzawa S."/>
            <person name="Miki H."/>
            <person name="Mignone F."/>
            <person name="Miyake S."/>
            <person name="Morris K."/>
            <person name="Mottagui-Tabar S."/>
            <person name="Mulder N."/>
            <person name="Nakano N."/>
            <person name="Nakauchi H."/>
            <person name="Ng P."/>
            <person name="Nilsson R."/>
            <person name="Nishiguchi S."/>
            <person name="Nishikawa S."/>
            <person name="Nori F."/>
            <person name="Ohara O."/>
            <person name="Okazaki Y."/>
            <person name="Orlando V."/>
            <person name="Pang K.C."/>
            <person name="Pavan W.J."/>
            <person name="Pavesi G."/>
            <person name="Pesole G."/>
            <person name="Petrovsky N."/>
            <person name="Piazza S."/>
            <person name="Reed J."/>
            <person name="Reid J.F."/>
            <person name="Ring B.Z."/>
            <person name="Ringwald M."/>
            <person name="Rost B."/>
            <person name="Ruan Y."/>
            <person name="Salzberg S.L."/>
            <person name="Sandelin A."/>
            <person name="Schneider C."/>
            <person name="Schoenbach C."/>
            <person name="Sekiguchi K."/>
            <person name="Semple C.A."/>
            <person name="Seno S."/>
            <person name="Sessa L."/>
            <person name="Sheng Y."/>
            <person name="Shibata Y."/>
            <person name="Shimada H."/>
            <person name="Shimada K."/>
            <person name="Silva D."/>
            <person name="Sinclair B."/>
            <person name="Sperling S."/>
            <person name="Stupka E."/>
            <person name="Sugiura K."/>
            <person name="Sultana R."/>
            <person name="Takenaka Y."/>
            <person name="Taki K."/>
            <person name="Tammoja K."/>
            <person name="Tan S.L."/>
            <person name="Tang S."/>
            <person name="Taylor M.S."/>
            <person name="Tegner J."/>
            <person name="Teichmann S.A."/>
            <person name="Ueda H.R."/>
            <person name="van Nimwegen E."/>
            <person name="Verardo R."/>
            <person name="Wei C.L."/>
            <person name="Yagi K."/>
            <person name="Yamanishi H."/>
            <person name="Zabarovsky E."/>
            <person name="Zhu S."/>
            <person name="Zimmer A."/>
            <person name="Hide W."/>
            <person name="Bult C."/>
            <person name="Grimmond S.M."/>
            <person name="Teasdale R.D."/>
            <person name="Liu E.T."/>
            <person name="Brusic V."/>
            <person name="Quackenbush J."/>
            <person name="Wahlestedt C."/>
            <person name="Mattick J.S."/>
            <person name="Hume D.A."/>
            <person name="Kai C."/>
            <person name="Sasaki D."/>
            <person name="Tomaru Y."/>
            <person name="Fukuda S."/>
            <person name="Kanamori-Katayama M."/>
            <person name="Suzuki M."/>
            <person name="Aoki J."/>
            <person name="Arakawa T."/>
            <person name="Iida J."/>
            <person name="Imamura K."/>
            <person name="Itoh M."/>
            <person name="Kato T."/>
            <person name="Kawaji H."/>
            <person name="Kawagashira N."/>
            <person name="Kawashima T."/>
            <person name="Kojima M."/>
            <person name="Kondo S."/>
            <person name="Konno H."/>
            <person name="Nakano K."/>
            <person name="Ninomiya N."/>
            <person name="Nishio T."/>
            <person name="Okada M."/>
            <person name="Plessy C."/>
            <person name="Shibata K."/>
            <person name="Shiraki T."/>
            <person name="Suzuki S."/>
            <person name="Tagami M."/>
            <person name="Waki K."/>
            <person name="Watahiki A."/>
            <person name="Okamura-Oho Y."/>
            <person name="Suzuki H."/>
            <person name="Kawai J."/>
            <person name="Hayashizaki Y."/>
        </authorList>
    </citation>
    <scope>NUCLEOTIDE SEQUENCE [LARGE SCALE MRNA]</scope>
    <source>
        <strain>C57BL/6J</strain>
        <tissue>Brain</tissue>
    </source>
</reference>
<reference key="5">
    <citation type="journal article" date="2004" name="Genome Res.">
        <title>The status, quality, and expansion of the NIH full-length cDNA project: the Mammalian Gene Collection (MGC).</title>
        <authorList>
            <consortium name="The MGC Project Team"/>
        </authorList>
    </citation>
    <scope>NUCLEOTIDE SEQUENCE [LARGE SCALE MRNA]</scope>
    <source>
        <strain>C57BL/6J</strain>
        <tissue>Eye</tissue>
    </source>
</reference>
<reference key="6">
    <citation type="journal article" date="1999" name="Proc. Natl. Acad. Sci. U.S.A.">
        <title>Abnormal neurotransmission in mice lacking synaptic vesicle protein 2A (SV2A).</title>
        <authorList>
            <person name="Crowder K.M."/>
            <person name="Gunther J.M."/>
            <person name="Jones T.A."/>
            <person name="Hale B.D."/>
            <person name="Zhang H.Z."/>
            <person name="Peterson M.R."/>
            <person name="Scheller R.H."/>
            <person name="Chavkin C."/>
            <person name="Bajjalieh S.M."/>
        </authorList>
    </citation>
    <scope>FUNCTION</scope>
    <scope>DISRUPTION PHENOTYPE</scope>
</reference>
<reference key="7">
    <citation type="journal article" date="2001" name="Nat. Cell Biol.">
        <title>SV2 modulates the size of the readily releasable pool of secretory vesicles.</title>
        <authorList>
            <person name="Xu T."/>
            <person name="Bajjalieh S.M."/>
        </authorList>
    </citation>
    <scope>FUNCTION</scope>
    <scope>DISRUPTION PHENOTYPE</scope>
</reference>
<reference key="8">
    <citation type="journal article" date="2002" name="J. Comp. Neurol.">
        <title>Cell-specific expression of plasma membrane calcium ATPase isoforms in retinal neurons.</title>
        <authorList>
            <person name="Krizaj D."/>
            <person name="Demarco S.J."/>
            <person name="Johnson J."/>
            <person name="Strehler E.E."/>
            <person name="Copenhagen D.R."/>
        </authorList>
    </citation>
    <scope>SUBCELLULAR LOCATION</scope>
</reference>
<reference key="9">
    <citation type="journal article" date="2003" name="J. Comp. Neurol.">
        <title>Differential distribution and developmental expression of synaptic vesicle protein 2 isoforms in the mouse retina.</title>
        <authorList>
            <person name="Wang M.M."/>
            <person name="Janz R."/>
            <person name="Belizaire R."/>
            <person name="Frishman L.J."/>
            <person name="Sherry D.M."/>
        </authorList>
    </citation>
    <scope>TISSUE SPECIFICITY</scope>
    <scope>DEVELOPMENTAL STAGE</scope>
</reference>
<reference key="10">
    <citation type="journal article" date="2006" name="J. Neurosci.">
        <title>Synaptic vesicle protein 2 enhances release probability at quiescent synapses.</title>
        <authorList>
            <person name="Custer K.L."/>
            <person name="Austin N.S."/>
            <person name="Sullivan J.M."/>
            <person name="Bajjalieh S.M."/>
        </authorList>
    </citation>
    <scope>FUNCTION</scope>
</reference>
<reference key="11">
    <citation type="journal article" date="2006" name="Science">
        <title>SV2 is the protein receptor for botulinum neurotoxin A.</title>
        <authorList>
            <person name="Dong M."/>
            <person name="Yeh F."/>
            <person name="Tepp W.H."/>
            <person name="Dean C."/>
            <person name="Johnson E.A."/>
            <person name="Janz R."/>
            <person name="Chapman E.R."/>
        </authorList>
    </citation>
    <scope>FUNCTION AS C.BOTULINUM NEUROTOXIN TYPE A RECEPTOR (MICROBIAL INFECTION)</scope>
    <scope>SUBUNIT (MICROBIAL INFECTION)</scope>
    <scope>TISSUE SPECIFICITY</scope>
    <scope>DISRUPTION PHENOTYPE</scope>
</reference>
<reference key="12">
    <citation type="journal article" date="2008" name="J. Proteome Res.">
        <title>Large-scale identification and evolution indexing of tyrosine phosphorylation sites from murine brain.</title>
        <authorList>
            <person name="Ballif B.A."/>
            <person name="Carey G.R."/>
            <person name="Sunyaev S.R."/>
            <person name="Gygi S.P."/>
        </authorList>
    </citation>
    <scope>PHOSPHORYLATION [LARGE SCALE ANALYSIS] AT TYR-480</scope>
    <scope>IDENTIFICATION BY MASS SPECTROMETRY [LARGE SCALE ANALYSIS]</scope>
    <source>
        <tissue>Brain</tissue>
    </source>
</reference>
<reference key="13">
    <citation type="journal article" date="2008" name="Mol. Biol. Cell">
        <title>Glycosylated SV2A and SV2B mediate the entry of botulinum neurotoxin E into neurons.</title>
        <authorList>
            <person name="Dong M."/>
            <person name="Liu H."/>
            <person name="Tepp W.H."/>
            <person name="Johnson E.A."/>
            <person name="Janz R."/>
            <person name="Chapman E.R."/>
        </authorList>
    </citation>
    <scope>FUNCTION AS C.BOTULINUM NEUROTOXIN TYPE E RECEPTOR (MICROBIAL INFECTION)</scope>
    <scope>TISSUE SPECIFICITY</scope>
    <scope>DISRUPTION PHENOTYPE</scope>
</reference>
<reference key="14">
    <citation type="journal article" date="2011" name="PLoS Pathog.">
        <title>Botulinum neurotoxin D uses synaptic vesicle protein SV2 and gangliosides as receptors.</title>
        <authorList>
            <person name="Peng L."/>
            <person name="Tepp W.H."/>
            <person name="Johnson E.A."/>
            <person name="Dong M."/>
        </authorList>
    </citation>
    <scope>POSSIBLE FUNCTION AS C.BOTULINUM NEUROTOXIN TYPE D RECEPTOR (MICROBIAL INFECTION)</scope>
    <scope>DISRUPTION PHENOTYPE</scope>
</reference>
<reference key="15">
    <citation type="journal article" date="2010" name="Cell">
        <title>A tissue-specific atlas of mouse protein phosphorylation and expression.</title>
        <authorList>
            <person name="Huttlin E.L."/>
            <person name="Jedrychowski M.P."/>
            <person name="Elias J.E."/>
            <person name="Goswami T."/>
            <person name="Rad R."/>
            <person name="Beausoleil S.A."/>
            <person name="Villen J."/>
            <person name="Haas W."/>
            <person name="Sowa M.E."/>
            <person name="Gygi S.P."/>
        </authorList>
    </citation>
    <scope>PHOSPHORYLATION [LARGE SCALE ANALYSIS] AT SER-80; SER-81; THR-84 AND SER-127</scope>
    <scope>IDENTIFICATION BY MASS SPECTROMETRY [LARGE SCALE ANALYSIS]</scope>
    <source>
        <tissue>Brain</tissue>
    </source>
</reference>
<protein>
    <recommendedName>
        <fullName>Synaptic vesicle glycoprotein 2A</fullName>
        <shortName>Synaptic vesicle protein 2</shortName>
        <shortName>Synaptic vesicle protein 2A</shortName>
    </recommendedName>
    <alternativeName>
        <fullName>Calcium regulator SV2A</fullName>
    </alternativeName>
</protein>
<proteinExistence type="evidence at protein level"/>
<feature type="chain" id="PRO_0000239766" description="Synaptic vesicle glycoprotein 2A">
    <location>
        <begin position="1"/>
        <end position="742"/>
    </location>
</feature>
<feature type="topological domain" description="Cytoplasmic" evidence="3">
    <location>
        <begin position="1"/>
        <end position="169"/>
    </location>
</feature>
<feature type="transmembrane region" description="Helical" evidence="3">
    <location>
        <begin position="170"/>
        <end position="190"/>
    </location>
</feature>
<feature type="topological domain" description="Extracellular" evidence="3">
    <location>
        <begin position="191"/>
        <end position="205"/>
    </location>
</feature>
<feature type="transmembrane region" description="Helical" evidence="3">
    <location>
        <begin position="206"/>
        <end position="226"/>
    </location>
</feature>
<feature type="topological domain" description="Cytoplasmic" evidence="3">
    <location>
        <begin position="227"/>
        <end position="233"/>
    </location>
</feature>
<feature type="transmembrane region" description="Helical" evidence="3">
    <location>
        <begin position="234"/>
        <end position="254"/>
    </location>
</feature>
<feature type="topological domain" description="Extracellular" evidence="3">
    <location>
        <begin position="255"/>
        <end position="262"/>
    </location>
</feature>
<feature type="transmembrane region" description="Helical" evidence="3">
    <location>
        <begin position="263"/>
        <end position="283"/>
    </location>
</feature>
<feature type="topological domain" description="Cytoplasmic" evidence="3">
    <location>
        <begin position="284"/>
        <end position="294"/>
    </location>
</feature>
<feature type="transmembrane region" description="Helical" evidence="3">
    <location>
        <begin position="295"/>
        <end position="315"/>
    </location>
</feature>
<feature type="topological domain" description="Extracellular" evidence="3">
    <location>
        <begin position="316"/>
        <end position="334"/>
    </location>
</feature>
<feature type="transmembrane region" description="Helical" evidence="3">
    <location>
        <begin position="335"/>
        <end position="355"/>
    </location>
</feature>
<feature type="topological domain" description="Cytoplasmic" evidence="3">
    <location>
        <begin position="356"/>
        <end position="447"/>
    </location>
</feature>
<feature type="transmembrane region" description="Helical" evidence="3">
    <location>
        <begin position="448"/>
        <end position="468"/>
    </location>
</feature>
<feature type="topological domain" description="Extracellular" evidence="3 14">
    <location>
        <begin position="469"/>
        <end position="598"/>
    </location>
</feature>
<feature type="transmembrane region" description="Helical" evidence="3">
    <location>
        <begin position="599"/>
        <end position="619"/>
    </location>
</feature>
<feature type="topological domain" description="Cytoplasmic" evidence="3">
    <location>
        <begin position="620"/>
        <end position="626"/>
    </location>
</feature>
<feature type="transmembrane region" description="Helical" evidence="3">
    <location>
        <begin position="627"/>
        <end position="647"/>
    </location>
</feature>
<feature type="topological domain" description="Extracellular" evidence="3">
    <location>
        <begin position="648"/>
        <end position="651"/>
    </location>
</feature>
<feature type="transmembrane region" description="Helical" evidence="3">
    <location>
        <begin position="652"/>
        <end position="672"/>
    </location>
</feature>
<feature type="topological domain" description="Cytoplasmic" evidence="3">
    <location>
        <begin position="673"/>
        <end position="685"/>
    </location>
</feature>
<feature type="transmembrane region" description="Helical" evidence="3">
    <location>
        <begin position="686"/>
        <end position="708"/>
    </location>
</feature>
<feature type="topological domain" description="Extracellular" evidence="3">
    <location>
        <begin position="709"/>
        <end position="712"/>
    </location>
</feature>
<feature type="transmembrane region" description="Helical" evidence="3">
    <location>
        <begin position="713"/>
        <end position="731"/>
    </location>
</feature>
<feature type="topological domain" description="Cytoplasmic" evidence="3">
    <location>
        <begin position="732"/>
        <end position="742"/>
    </location>
</feature>
<feature type="region of interest" description="Interaction with SYT1" evidence="1">
    <location>
        <begin position="1"/>
        <end position="57"/>
    </location>
</feature>
<feature type="region of interest" description="Disordered" evidence="4">
    <location>
        <begin position="40"/>
        <end position="145"/>
    </location>
</feature>
<feature type="compositionally biased region" description="Basic and acidic residues" evidence="4">
    <location>
        <begin position="40"/>
        <end position="49"/>
    </location>
</feature>
<feature type="compositionally biased region" description="Gly residues" evidence="4">
    <location>
        <begin position="122"/>
        <end position="137"/>
    </location>
</feature>
<feature type="modified residue" description="Phosphoserine" evidence="17">
    <location>
        <position position="80"/>
    </location>
</feature>
<feature type="modified residue" description="Phosphoserine" evidence="17">
    <location>
        <position position="81"/>
    </location>
</feature>
<feature type="modified residue" description="Phosphothreonine" evidence="17">
    <location>
        <position position="84"/>
    </location>
</feature>
<feature type="modified residue" description="Phosphoserine" evidence="17">
    <location>
        <position position="127"/>
    </location>
</feature>
<feature type="modified residue" description="Phosphoserine" evidence="2">
    <location>
        <position position="393"/>
    </location>
</feature>
<feature type="modified residue" description="Phosphotyrosine" evidence="16">
    <location>
        <position position="480"/>
    </location>
</feature>
<feature type="glycosylation site" description="N-linked (GlcNAc...) asparagine" evidence="3">
    <location>
        <position position="498"/>
    </location>
</feature>
<feature type="glycosylation site" description="N-linked (GlcNAc...) asparagine" evidence="3">
    <location>
        <position position="548"/>
    </location>
</feature>
<feature type="glycosylation site" description="N-linked (GlcNAc...) asparagine" evidence="3">
    <location>
        <position position="573"/>
    </location>
</feature>
<comment type="function">
    <text>Plays a role in the control of regulated secretion in neural and endocrine cells, enhancing selectively low-frequency neurotransmission. Positively regulates vesicle fusion by maintaining the readily releasable pool of secretory vesicles.</text>
</comment>
<comment type="function">
    <text evidence="10">(Microbial infection) Receptor for C.botulinum neurotoxin type A (BoNT/A, botA); the toxin probably binds via extracellular loop 4 (PubMed:16543415).</text>
</comment>
<comment type="function">
    <text evidence="12">(Microbial infection) Possible receptor for C.botulinum neurotoxin type D (BoNT/D, botD); BoNT/D does not bind to extracellular loop 4 as do BoNT/A and BoNT/E (PubMed:21483489).</text>
</comment>
<comment type="function">
    <text evidence="11 15">(Microbial infection) Receptor for C.botulinum neurotoxin type E (BoNT/E); the toxin probably binds via extracellular loop 4 (PubMed:18815274). It probably requires glycosylation of Asn-573 (PubMed:18815274).</text>
</comment>
<comment type="subunit">
    <text evidence="1">Interacts with SYT1/synaptotagmin-1 in a calcium-dependent manner. Binds the adapter protein complex AP-2 (By similarity).</text>
</comment>
<comment type="subunit">
    <text evidence="11 14">(Microbial infection) Interacts with C.botulinum neurotoxin type A (BoNT/A, botA).</text>
</comment>
<comment type="subcellular location">
    <subcellularLocation>
        <location evidence="8">Presynapse</location>
    </subcellularLocation>
    <subcellularLocation>
        <location evidence="2">Cytoplasmic vesicle</location>
        <location evidence="2">Secretory vesicle</location>
        <location evidence="2">Synaptic vesicle membrane</location>
        <topology evidence="2">Multi-pass membrane protein</topology>
    </subcellularLocation>
    <text evidence="2 8">Enriched in chromaffin granules, not present in adrenal microsomes. Associated with both insulin granules and synaptic-like microvesicles in insulin-secreting cells of the pancreas (By similarity). Colocalizes with ATP2B1 at photoreceptor synaptic terminals.</text>
</comment>
<comment type="tissue specificity">
    <text evidence="9 10 11">Expressed in conventional synapses and cone ribbon synapses in the retina (at protein level) (PubMed:12687700). Expressed in diaphragm motor nerve terminals (at protein level) (PubMed:16543415). Expressed in hippocampus neurons (at protein level) (PubMed:18815274).</text>
</comment>
<comment type="developmental stage">
    <text evidence="9">Expressed during synaptogenesis in the retina (at protein level).</text>
</comment>
<comment type="PTM">
    <text evidence="1">Phosphorylation by CK1 of the N-terminal cytoplasmic domain regulates interaction with SYT1.</text>
</comment>
<comment type="PTM">
    <text evidence="15">N-glycosylated.</text>
</comment>
<comment type="disruption phenotype">
    <text evidence="5 6 7 10 11 12">Mice fail to grow, experience severe epileptic seizures and die immediately or shortly after birth probably due to multiple neural and endocrine deficits (PubMed:10624962). Mice lacking both Sv2a and Sv2b display a similar phenotype (PubMed:10624962). Diaphragm motor nerve terminals from mice with only a single copy of this gene and no Sv2b have decreased binding of C.botulinum neurotoxin type A (BoNT/A, botA) and are less sensitive to the toxin (PubMed:16543415). Hippocampal neurons from young mice lacking both Sv2a and Sv2b do not bind BoNT/A, nor do they take it up (PubMed:16543415, PubMed:18815274). Hippocampal neurons from young mice lacking both Sv2a and Sv2b do not bind C.botulinum neurotoxin type E (BoNT/E), nor do they take it up (PubMed:18815274). Hippocampal neurons from young mice lacking both Sv2a and Sv2b do not bind C.botulinum neurotoxin type BoNT/D (BoNT/D, botD), nor do they take it up (PubMed:21483489). Hippocampal neurons from young mice lacking both Sv2a and Sv2b take up C.botulinum neurotoxin type C (BoNT/C) and C.botulinum neurotoxin type F (BonT/F, botF) normally (PubMed:21483489).</text>
</comment>
<comment type="similarity">
    <text evidence="13">Belongs to the major facilitator superfamily.</text>
</comment>
<comment type="sequence caution" evidence="13">
    <conflict type="frameshift">
        <sequence resource="EMBL-CDS" id="BAC65642"/>
    </conflict>
</comment>
<sequence>MEEGFRDRAAFIRGAKDIAKEVKKHAAKKVVKGLDRVQDEYSRRSYSRFEEEDDDDDFPAPADGYYRGEGAQDEEEGGASSDATEGHDEDDEIYEGEYQGIPRAESGGKGERMADGAPLAGVRGGLSDGEGPPGGRGEAQRRKDREELAQQYETILRECGHGRFQWTLYFVLGLALMADGVEVFVVGFVLPSAEKDMCLSDSNKGMLGLIVYLGMMVGAFLWGGLADRLGRRQCLLISLSVNSVFAFFSSFVQGYGTFLFCRLLSGVGIGGSIPIVFSYFSEFLAQEKRGEHLSWLCMFWMIGGVYAAAMAWAIIPHYGWSFQMGSAYQFHSWRVFVLVCAFPSVFAIGALTTQPESPRFFLENGKHDEAWMVLKQVHDTNMRAKGHPERVFSVTHIKTIHQEDELIEIQSDTGTWYQRWGVRALSLGGQVWGNFLSCFSPEYRRITLMMMGVWFTMSFSYYGLTVWFPDMIRHLQAVDYAARTKVFPGERVEHVTFNFTLENQIHRGGQYFNDKFIGLRLKSVSFEDSLFEECYFEDVTSSNTFFRNCTFINTVFYNTDLFEYKFVNSRLVNSTFLHNKEGCPLDVTGTGEGAYMVYFVSFLGTLAVLPGNIVSALLMDKIGRLRMLAGSSVLSCVSCFFLSFGNSESAMIALLCLFGGVSIASWNALDVLTVELYPSDKRTTAFGFLNALCKLAAVLGISIFTSFVGITKAAPILFASAALALGSSLALKLPETRGQVLQ</sequence>
<gene>
    <name type="primary">Sv2a</name>
    <name type="synonym">Kiaa0736</name>
    <name type="synonym">Sv2</name>
</gene>
<name>SV2A_MOUSE</name>
<organism>
    <name type="scientific">Mus musculus</name>
    <name type="common">Mouse</name>
    <dbReference type="NCBI Taxonomy" id="10090"/>
    <lineage>
        <taxon>Eukaryota</taxon>
        <taxon>Metazoa</taxon>
        <taxon>Chordata</taxon>
        <taxon>Craniata</taxon>
        <taxon>Vertebrata</taxon>
        <taxon>Euteleostomi</taxon>
        <taxon>Mammalia</taxon>
        <taxon>Eutheria</taxon>
        <taxon>Euarchontoglires</taxon>
        <taxon>Glires</taxon>
        <taxon>Rodentia</taxon>
        <taxon>Myomorpha</taxon>
        <taxon>Muroidea</taxon>
        <taxon>Muridae</taxon>
        <taxon>Murinae</taxon>
        <taxon>Mus</taxon>
        <taxon>Mus</taxon>
    </lineage>
</organism>
<accession>Q9JIS5</accession>
<accession>Q80TT0</accession>
<accession>Q8R0R5</accession>